<accession>Q6DN58</accession>
<comment type="function">
    <text evidence="1">Mitochondrial DNA endonuclease involved in intron homing.</text>
</comment>
<comment type="subcellular location">
    <subcellularLocation>
        <location>Mitochondrion</location>
    </subcellularLocation>
</comment>
<comment type="miscellaneous">
    <text>Encoded within intron 3 of COX1.</text>
</comment>
<comment type="similarity">
    <text evidence="3">Belongs to the LAGLIDADG endonuclease family.</text>
</comment>
<organism>
    <name type="scientific">Kluyveromyces lactis (strain ATCC 8585 / CBS 2359 / DSM 70799 / NBRC 1267 / NRRL Y-1140 / WM37)</name>
    <name type="common">Yeast</name>
    <name type="synonym">Candida sphaerica</name>
    <dbReference type="NCBI Taxonomy" id="284590"/>
    <lineage>
        <taxon>Eukaryota</taxon>
        <taxon>Fungi</taxon>
        <taxon>Dikarya</taxon>
        <taxon>Ascomycota</taxon>
        <taxon>Saccharomycotina</taxon>
        <taxon>Saccharomycetes</taxon>
        <taxon>Saccharomycetales</taxon>
        <taxon>Saccharomycetaceae</taxon>
        <taxon>Kluyveromyces</taxon>
    </lineage>
</organism>
<dbReference type="EC" id="3.1.-.-"/>
<dbReference type="EMBL" id="AY654900">
    <property type="protein sequence ID" value="AAT64957.1"/>
    <property type="molecule type" value="Genomic_DNA"/>
</dbReference>
<dbReference type="SMR" id="Q6DN58"/>
<dbReference type="FunCoup" id="Q6DN58">
    <property type="interactions" value="11"/>
</dbReference>
<dbReference type="STRING" id="284590.Q6DN58"/>
<dbReference type="PaxDb" id="284590-Q6DN58"/>
<dbReference type="InParanoid" id="Q6DN58"/>
<dbReference type="GO" id="GO:0005739">
    <property type="term" value="C:mitochondrion"/>
    <property type="evidence" value="ECO:0007669"/>
    <property type="project" value="UniProtKB-SubCell"/>
</dbReference>
<dbReference type="GO" id="GO:0004519">
    <property type="term" value="F:endonuclease activity"/>
    <property type="evidence" value="ECO:0007669"/>
    <property type="project" value="UniProtKB-KW"/>
</dbReference>
<dbReference type="GO" id="GO:0006314">
    <property type="term" value="P:intron homing"/>
    <property type="evidence" value="ECO:0007669"/>
    <property type="project" value="UniProtKB-KW"/>
</dbReference>
<dbReference type="Gene3D" id="3.10.28.10">
    <property type="entry name" value="Homing endonucleases"/>
    <property type="match status" value="2"/>
</dbReference>
<dbReference type="InterPro" id="IPR027434">
    <property type="entry name" value="Homing_endonucl"/>
</dbReference>
<dbReference type="InterPro" id="IPR004860">
    <property type="entry name" value="LAGLIDADG_dom"/>
</dbReference>
<dbReference type="InterPro" id="IPR051289">
    <property type="entry name" value="LAGLIDADG_Endonuclease"/>
</dbReference>
<dbReference type="PANTHER" id="PTHR36181">
    <property type="entry name" value="INTRON-ENCODED ENDONUCLEASE AI3-RELATED"/>
    <property type="match status" value="1"/>
</dbReference>
<dbReference type="PANTHER" id="PTHR36181:SF2">
    <property type="entry name" value="INTRON-ENCODED ENDONUCLEASE AI3-RELATED"/>
    <property type="match status" value="1"/>
</dbReference>
<dbReference type="Pfam" id="PF00961">
    <property type="entry name" value="LAGLIDADG_1"/>
    <property type="match status" value="2"/>
</dbReference>
<dbReference type="SUPFAM" id="SSF55608">
    <property type="entry name" value="Homing endonucleases"/>
    <property type="match status" value="2"/>
</dbReference>
<gene>
    <name type="primary">aI3</name>
</gene>
<name>AI3_KLULA</name>
<reference key="1">
    <citation type="journal article" date="2005" name="FEMS Yeast Res.">
        <title>Complete nucleotide sequence of the mitochondrial DNA from Kluyveromyces lactis.</title>
        <authorList>
            <person name="Zivanovic Y."/>
            <person name="Wincker P."/>
            <person name="Vacherie B."/>
            <person name="Bolotin-Fukuhara M."/>
            <person name="Fukuhara H."/>
        </authorList>
    </citation>
    <scope>NUCLEOTIDE SEQUENCE [LARGE SCALE GENOMIC DNA]</scope>
    <source>
        <strain>ATCC 76492 / CBS 2359/152 / CLIB 210</strain>
    </source>
</reference>
<protein>
    <recommendedName>
        <fullName>Probable intron-encoded endonuclease aI3</fullName>
        <ecNumber>3.1.-.-</ecNumber>
    </recommendedName>
</protein>
<feature type="chain" id="PRO_0000415147" description="Probable intron-encoded endonuclease aI3">
    <location>
        <begin position="1"/>
        <end position="396"/>
    </location>
</feature>
<feature type="region of interest" description="Disordered" evidence="2">
    <location>
        <begin position="51"/>
        <end position="90"/>
    </location>
</feature>
<feature type="compositionally biased region" description="Low complexity" evidence="2">
    <location>
        <begin position="74"/>
        <end position="90"/>
    </location>
</feature>
<proteinExistence type="inferred from homology"/>
<evidence type="ECO:0000250" key="1"/>
<evidence type="ECO:0000256" key="2">
    <source>
        <dbReference type="SAM" id="MobiDB-lite"/>
    </source>
</evidence>
<evidence type="ECO:0000305" key="3"/>
<geneLocation type="mitochondrion"/>
<sequence length="396" mass="47401">MNIIIIILYISYIYTYPFSNGKYCNLYNPTTFYKINNILYSIKIYNINNNTNNTNNNNPADSSSYESRMRAAGNSNSNSNSNSDSNINNTNNINNTNNIYNINNNINNNNNINNNYINNSIPCGSYPQGRWTAGSEFYKMLFVGLFDSNGNIQINKYKSKYLQFRLIIKLNNNKENINILNNIKHYLKGNININNNYVIWIINDIKNINNLIKLFNKYPLITINKKLQLAFIKSIYYIYKNNRNLAINLYLKDRNNKYNPNLYKYYKDINYTKINYFSPANFHKKFAGININININNNYNHNYINVWFLGFIENKGKFIIRKNNNNSFLFYINDKHLIEFLKNYFNIKNKLIYKNNIYILEVYNKYYINIFIKFFNKYNLQGYKYIEYIKWKKINI</sequence>
<keyword id="KW-0255">Endonuclease</keyword>
<keyword id="KW-0378">Hydrolase</keyword>
<keyword id="KW-0404">Intron homing</keyword>
<keyword id="KW-0496">Mitochondrion</keyword>
<keyword id="KW-0540">Nuclease</keyword>